<feature type="chain" id="PRO_0000056850" description="Aminodeoxychorismate synthase component 2">
    <location>
        <begin position="1"/>
        <end position="187"/>
    </location>
</feature>
<feature type="domain" description="Glutamine amidotransferase type-1" evidence="2">
    <location>
        <begin position="1"/>
        <end position="187"/>
    </location>
</feature>
<feature type="active site" evidence="2">
    <location>
        <position position="79"/>
    </location>
</feature>
<feature type="active site" evidence="2">
    <location>
        <position position="168"/>
    </location>
</feature>
<feature type="active site" evidence="2">
    <location>
        <position position="170"/>
    </location>
</feature>
<protein>
    <recommendedName>
        <fullName>Aminodeoxychorismate synthase component 2</fullName>
        <shortName>ADC synthase</shortName>
        <shortName>ADCS</shortName>
        <ecNumber>2.6.1.85</ecNumber>
    </recommendedName>
    <alternativeName>
        <fullName>4-amino-4-deoxychorismate synthase component 2</fullName>
    </alternativeName>
    <alternativeName>
        <fullName>Aminodeoxychorismate synthase, glutamine amidotransferase component</fullName>
    </alternativeName>
</protein>
<sequence length="187" mass="20564">MILLIDNYDSFTWNLYQYFCELGAEVLVRRNDELTLADIISLAPAKIVISPGPCTPDESGISLAAIRHFSGQTPILGVCLGHQAIAQVFGAAIVRAAKVMHGKTSPVSHTGQGVFLGLNNPLTVTRYHSLLIDPRTLPECFEVTARSEEGEIMGIRHRVFDLEGVQFHPESILSEQGHQLLANFLNR</sequence>
<dbReference type="EC" id="2.6.1.85"/>
<dbReference type="EMBL" id="X02604">
    <property type="protein sequence ID" value="CAA26451.1"/>
    <property type="molecule type" value="Genomic_DNA"/>
</dbReference>
<dbReference type="SMR" id="P06194"/>
<dbReference type="STRING" id="548.EAG7_04485"/>
<dbReference type="MEROPS" id="C26.955"/>
<dbReference type="UniPathway" id="UPA00077">
    <property type="reaction ID" value="UER00149"/>
</dbReference>
<dbReference type="GO" id="GO:0005829">
    <property type="term" value="C:cytosol"/>
    <property type="evidence" value="ECO:0007669"/>
    <property type="project" value="TreeGrafter"/>
</dbReference>
<dbReference type="GO" id="GO:0046820">
    <property type="term" value="F:4-amino-4-deoxychorismate synthase activity"/>
    <property type="evidence" value="ECO:0000250"/>
    <property type="project" value="UniProtKB"/>
</dbReference>
<dbReference type="GO" id="GO:0004049">
    <property type="term" value="F:anthranilate synthase activity"/>
    <property type="evidence" value="ECO:0007669"/>
    <property type="project" value="TreeGrafter"/>
</dbReference>
<dbReference type="GO" id="GO:0046656">
    <property type="term" value="P:folic acid biosynthetic process"/>
    <property type="evidence" value="ECO:0007669"/>
    <property type="project" value="UniProtKB-KW"/>
</dbReference>
<dbReference type="GO" id="GO:0000162">
    <property type="term" value="P:L-tryptophan biosynthetic process"/>
    <property type="evidence" value="ECO:0007669"/>
    <property type="project" value="TreeGrafter"/>
</dbReference>
<dbReference type="GO" id="GO:0046654">
    <property type="term" value="P:tetrahydrofolate biosynthetic process"/>
    <property type="evidence" value="ECO:0000250"/>
    <property type="project" value="UniProtKB"/>
</dbReference>
<dbReference type="CDD" id="cd01743">
    <property type="entry name" value="GATase1_Anthranilate_Synthase"/>
    <property type="match status" value="1"/>
</dbReference>
<dbReference type="FunFam" id="3.40.50.880:FF:000003">
    <property type="entry name" value="Anthranilate synthase component II"/>
    <property type="match status" value="1"/>
</dbReference>
<dbReference type="Gene3D" id="3.40.50.880">
    <property type="match status" value="1"/>
</dbReference>
<dbReference type="InterPro" id="IPR050472">
    <property type="entry name" value="Anth_synth/Amidotransfase"/>
</dbReference>
<dbReference type="InterPro" id="IPR029062">
    <property type="entry name" value="Class_I_gatase-like"/>
</dbReference>
<dbReference type="InterPro" id="IPR017926">
    <property type="entry name" value="GATASE"/>
</dbReference>
<dbReference type="InterPro" id="IPR006221">
    <property type="entry name" value="TrpG/PapA_dom"/>
</dbReference>
<dbReference type="NCBIfam" id="NF005946">
    <property type="entry name" value="PRK08007.1"/>
    <property type="match status" value="1"/>
</dbReference>
<dbReference type="NCBIfam" id="TIGR00566">
    <property type="entry name" value="trpG_papA"/>
    <property type="match status" value="1"/>
</dbReference>
<dbReference type="PANTHER" id="PTHR43418:SF4">
    <property type="entry name" value="MULTIFUNCTIONAL TRYPTOPHAN BIOSYNTHESIS PROTEIN"/>
    <property type="match status" value="1"/>
</dbReference>
<dbReference type="PANTHER" id="PTHR43418">
    <property type="entry name" value="MULTIFUNCTIONAL TRYPTOPHAN BIOSYNTHESIS PROTEIN-RELATED"/>
    <property type="match status" value="1"/>
</dbReference>
<dbReference type="Pfam" id="PF00117">
    <property type="entry name" value="GATase"/>
    <property type="match status" value="1"/>
</dbReference>
<dbReference type="PRINTS" id="PR00097">
    <property type="entry name" value="ANTSNTHASEII"/>
</dbReference>
<dbReference type="PRINTS" id="PR00099">
    <property type="entry name" value="CPSGATASE"/>
</dbReference>
<dbReference type="PRINTS" id="PR00096">
    <property type="entry name" value="GATASE"/>
</dbReference>
<dbReference type="SUPFAM" id="SSF52317">
    <property type="entry name" value="Class I glutamine amidotransferase-like"/>
    <property type="match status" value="1"/>
</dbReference>
<dbReference type="PROSITE" id="PS51273">
    <property type="entry name" value="GATASE_TYPE_1"/>
    <property type="match status" value="1"/>
</dbReference>
<keyword id="KW-0289">Folate biosynthesis</keyword>
<keyword id="KW-0315">Glutamine amidotransferase</keyword>
<keyword id="KW-0808">Transferase</keyword>
<reference key="1">
    <citation type="journal article" date="1985" name="J. Mol. Biol.">
        <title>Evolution of glutamine amidotransferase genes. Nucleotide sequences of the pabA genes from Salmonella typhimurium, Klebsiella aerogenes and Serratia marcescens.</title>
        <authorList>
            <person name="Kaplan J.B."/>
            <person name="Merkel W.K."/>
            <person name="Nichols B.P."/>
        </authorList>
    </citation>
    <scope>NUCLEOTIDE SEQUENCE [GENOMIC DNA]</scope>
</reference>
<gene>
    <name type="primary">pabA</name>
</gene>
<accession>P06194</accession>
<proteinExistence type="inferred from homology"/>
<name>PABA_KLEAE</name>
<organism>
    <name type="scientific">Klebsiella aerogenes</name>
    <name type="common">Enterobacter aerogenes</name>
    <dbReference type="NCBI Taxonomy" id="548"/>
    <lineage>
        <taxon>Bacteria</taxon>
        <taxon>Pseudomonadati</taxon>
        <taxon>Pseudomonadota</taxon>
        <taxon>Gammaproteobacteria</taxon>
        <taxon>Enterobacterales</taxon>
        <taxon>Enterobacteriaceae</taxon>
        <taxon>Klebsiella/Raoultella group</taxon>
        <taxon>Klebsiella</taxon>
    </lineage>
</organism>
<evidence type="ECO:0000250" key="1"/>
<evidence type="ECO:0000255" key="2">
    <source>
        <dbReference type="PROSITE-ProRule" id="PRU00605"/>
    </source>
</evidence>
<comment type="function">
    <text evidence="1">Part of a heterodimeric complex that catalyzes the two-step biosynthesis of 4-amino-4-deoxychorismate (ADC), a precursor of p-aminobenzoate (PABA) and tetrahydrofolate. In the first step, a glutamine amidotransferase (PabA) generates ammonia as a substrate that, along with chorismate, is used in the second step, catalyzed by aminodeoxychorismate synthase (PabB) to produce ADC. PabA converts glutamine into glutamate only in the presence of stoichiometric amounts of PabB (By similarity).</text>
</comment>
<comment type="catalytic activity">
    <reaction>
        <text>chorismate + L-glutamine = 4-amino-4-deoxychorismate + L-glutamate</text>
        <dbReference type="Rhea" id="RHEA:11672"/>
        <dbReference type="ChEBI" id="CHEBI:29748"/>
        <dbReference type="ChEBI" id="CHEBI:29985"/>
        <dbReference type="ChEBI" id="CHEBI:58359"/>
        <dbReference type="ChEBI" id="CHEBI:58406"/>
        <dbReference type="EC" id="2.6.1.85"/>
    </reaction>
</comment>
<comment type="pathway">
    <text>Cofactor biosynthesis; tetrahydrofolate biosynthesis; 4-aminobenzoate from chorismate: step 1/2.</text>
</comment>
<comment type="subunit">
    <text evidence="1">Monomer. Heterodimer consisting of two non-identical subunits: a glutamine amidotransferase subunit (PabA) and a aminodeoxychorismate synthase subunit (PabB) (By similarity).</text>
</comment>